<accession>B2HI48</accession>
<protein>
    <recommendedName>
        <fullName evidence="1">DNA replication and repair protein RecF</fullName>
    </recommendedName>
</protein>
<gene>
    <name evidence="1" type="primary">recF</name>
    <name type="ordered locus">MMAR_0003</name>
</gene>
<evidence type="ECO:0000255" key="1">
    <source>
        <dbReference type="HAMAP-Rule" id="MF_00365"/>
    </source>
</evidence>
<reference key="1">
    <citation type="journal article" date="2008" name="Genome Res.">
        <title>Insights from the complete genome sequence of Mycobacterium marinum on the evolution of Mycobacterium tuberculosis.</title>
        <authorList>
            <person name="Stinear T.P."/>
            <person name="Seemann T."/>
            <person name="Harrison P.F."/>
            <person name="Jenkin G.A."/>
            <person name="Davies J.K."/>
            <person name="Johnson P.D."/>
            <person name="Abdellah Z."/>
            <person name="Arrowsmith C."/>
            <person name="Chillingworth T."/>
            <person name="Churcher C."/>
            <person name="Clarke K."/>
            <person name="Cronin A."/>
            <person name="Davis P."/>
            <person name="Goodhead I."/>
            <person name="Holroyd N."/>
            <person name="Jagels K."/>
            <person name="Lord A."/>
            <person name="Moule S."/>
            <person name="Mungall K."/>
            <person name="Norbertczak H."/>
            <person name="Quail M.A."/>
            <person name="Rabbinowitsch E."/>
            <person name="Walker D."/>
            <person name="White B."/>
            <person name="Whitehead S."/>
            <person name="Small P.L."/>
            <person name="Brosch R."/>
            <person name="Ramakrishnan L."/>
            <person name="Fischbach M.A."/>
            <person name="Parkhill J."/>
            <person name="Cole S.T."/>
        </authorList>
    </citation>
    <scope>NUCLEOTIDE SEQUENCE [LARGE SCALE GENOMIC DNA]</scope>
    <source>
        <strain>ATCC BAA-535 / M</strain>
    </source>
</reference>
<keyword id="KW-0067">ATP-binding</keyword>
<keyword id="KW-0963">Cytoplasm</keyword>
<keyword id="KW-0227">DNA damage</keyword>
<keyword id="KW-0234">DNA repair</keyword>
<keyword id="KW-0235">DNA replication</keyword>
<keyword id="KW-0238">DNA-binding</keyword>
<keyword id="KW-0547">Nucleotide-binding</keyword>
<keyword id="KW-1185">Reference proteome</keyword>
<keyword id="KW-0742">SOS response</keyword>
<comment type="function">
    <text evidence="1">The RecF protein is involved in DNA metabolism; it is required for DNA replication and normal SOS inducibility. RecF binds preferentially to single-stranded, linear DNA. It also seems to bind ATP.</text>
</comment>
<comment type="subcellular location">
    <subcellularLocation>
        <location evidence="1">Cytoplasm</location>
    </subcellularLocation>
</comment>
<comment type="similarity">
    <text evidence="1">Belongs to the RecF family.</text>
</comment>
<organism>
    <name type="scientific">Mycobacterium marinum (strain ATCC BAA-535 / M)</name>
    <dbReference type="NCBI Taxonomy" id="216594"/>
    <lineage>
        <taxon>Bacteria</taxon>
        <taxon>Bacillati</taxon>
        <taxon>Actinomycetota</taxon>
        <taxon>Actinomycetes</taxon>
        <taxon>Mycobacteriales</taxon>
        <taxon>Mycobacteriaceae</taxon>
        <taxon>Mycobacterium</taxon>
        <taxon>Mycobacterium ulcerans group</taxon>
    </lineage>
</organism>
<proteinExistence type="inferred from homology"/>
<feature type="chain" id="PRO_1000121133" description="DNA replication and repair protein RecF">
    <location>
        <begin position="1"/>
        <end position="385"/>
    </location>
</feature>
<feature type="binding site" evidence="1">
    <location>
        <begin position="30"/>
        <end position="37"/>
    </location>
    <ligand>
        <name>ATP</name>
        <dbReference type="ChEBI" id="CHEBI:30616"/>
    </ligand>
</feature>
<sequence length="385" mass="41742">MYVRHLGLRDFRSWAHADLELGPGRTVFVGPNGFGKTNIIEALWYSATLGSHRVGTDAPLIRAGADRAVISTIVVNDGRECAVDLEIAAGRANKARLNRSPVRSTREVIGVLRAVLFAPEDLALVRGDPADRRRYLDDLATLRRPTIAGVRADYDKVLRQRTALLKSVSGARFRGDRGALDTLDVWDSRLAQHGAELMAARIDLVRLLAPEVEKAYQLLAPESRSAAIAYRASMDAFVAADDAAPDRVTLEEGLLAALAARRDAELERGVCLVGPHRDDLELRLGDQPAKGFASHGESWSMAVALRLAAFALLRADGSEPVLLLDDVFAELDAARRTALARVAESAEQVLVTAAVLEDIPSGWDARKVHIDLRDSADGRVSVVQS</sequence>
<dbReference type="EMBL" id="CP000854">
    <property type="protein sequence ID" value="ACC38474.1"/>
    <property type="molecule type" value="Genomic_DNA"/>
</dbReference>
<dbReference type="RefSeq" id="WP_012392011.1">
    <property type="nucleotide sequence ID" value="NC_010612.1"/>
</dbReference>
<dbReference type="SMR" id="B2HI48"/>
<dbReference type="STRING" id="216594.MMAR_0003"/>
<dbReference type="KEGG" id="mmi:MMAR_0003"/>
<dbReference type="eggNOG" id="COG1195">
    <property type="taxonomic scope" value="Bacteria"/>
</dbReference>
<dbReference type="HOGENOM" id="CLU_040267_1_1_11"/>
<dbReference type="OrthoDB" id="9803889at2"/>
<dbReference type="Proteomes" id="UP000001190">
    <property type="component" value="Chromosome"/>
</dbReference>
<dbReference type="GO" id="GO:0005737">
    <property type="term" value="C:cytoplasm"/>
    <property type="evidence" value="ECO:0007669"/>
    <property type="project" value="UniProtKB-SubCell"/>
</dbReference>
<dbReference type="GO" id="GO:0005524">
    <property type="term" value="F:ATP binding"/>
    <property type="evidence" value="ECO:0007669"/>
    <property type="project" value="UniProtKB-UniRule"/>
</dbReference>
<dbReference type="GO" id="GO:0003697">
    <property type="term" value="F:single-stranded DNA binding"/>
    <property type="evidence" value="ECO:0007669"/>
    <property type="project" value="UniProtKB-UniRule"/>
</dbReference>
<dbReference type="GO" id="GO:0006260">
    <property type="term" value="P:DNA replication"/>
    <property type="evidence" value="ECO:0007669"/>
    <property type="project" value="UniProtKB-UniRule"/>
</dbReference>
<dbReference type="GO" id="GO:0000731">
    <property type="term" value="P:DNA synthesis involved in DNA repair"/>
    <property type="evidence" value="ECO:0007669"/>
    <property type="project" value="TreeGrafter"/>
</dbReference>
<dbReference type="GO" id="GO:0006302">
    <property type="term" value="P:double-strand break repair"/>
    <property type="evidence" value="ECO:0007669"/>
    <property type="project" value="TreeGrafter"/>
</dbReference>
<dbReference type="GO" id="GO:0009432">
    <property type="term" value="P:SOS response"/>
    <property type="evidence" value="ECO:0007669"/>
    <property type="project" value="UniProtKB-UniRule"/>
</dbReference>
<dbReference type="CDD" id="cd03242">
    <property type="entry name" value="ABC_RecF"/>
    <property type="match status" value="1"/>
</dbReference>
<dbReference type="Gene3D" id="3.40.50.300">
    <property type="entry name" value="P-loop containing nucleotide triphosphate hydrolases"/>
    <property type="match status" value="1"/>
</dbReference>
<dbReference type="Gene3D" id="1.20.1050.90">
    <property type="entry name" value="RecF/RecN/SMC, N-terminal domain"/>
    <property type="match status" value="1"/>
</dbReference>
<dbReference type="HAMAP" id="MF_00365">
    <property type="entry name" value="RecF"/>
    <property type="match status" value="1"/>
</dbReference>
<dbReference type="InterPro" id="IPR001238">
    <property type="entry name" value="DNA-binding_RecF"/>
</dbReference>
<dbReference type="InterPro" id="IPR018078">
    <property type="entry name" value="DNA-binding_RecF_CS"/>
</dbReference>
<dbReference type="InterPro" id="IPR027417">
    <property type="entry name" value="P-loop_NTPase"/>
</dbReference>
<dbReference type="InterPro" id="IPR003395">
    <property type="entry name" value="RecF/RecN/SMC_N"/>
</dbReference>
<dbReference type="InterPro" id="IPR042174">
    <property type="entry name" value="RecF_2"/>
</dbReference>
<dbReference type="NCBIfam" id="TIGR00611">
    <property type="entry name" value="recf"/>
    <property type="match status" value="1"/>
</dbReference>
<dbReference type="PANTHER" id="PTHR32182">
    <property type="entry name" value="DNA REPLICATION AND REPAIR PROTEIN RECF"/>
    <property type="match status" value="1"/>
</dbReference>
<dbReference type="PANTHER" id="PTHR32182:SF0">
    <property type="entry name" value="DNA REPLICATION AND REPAIR PROTEIN RECF"/>
    <property type="match status" value="1"/>
</dbReference>
<dbReference type="Pfam" id="PF02463">
    <property type="entry name" value="SMC_N"/>
    <property type="match status" value="1"/>
</dbReference>
<dbReference type="SUPFAM" id="SSF52540">
    <property type="entry name" value="P-loop containing nucleoside triphosphate hydrolases"/>
    <property type="match status" value="1"/>
</dbReference>
<dbReference type="PROSITE" id="PS00617">
    <property type="entry name" value="RECF_1"/>
    <property type="match status" value="1"/>
</dbReference>
<dbReference type="PROSITE" id="PS00618">
    <property type="entry name" value="RECF_2"/>
    <property type="match status" value="1"/>
</dbReference>
<name>RECF_MYCMM</name>